<comment type="function">
    <text evidence="2">Plays a role in the inhibition of the host NF-kappa-B pathway. This inhibition occurs at the receptor level, by preventing the signaling of TNFR1 as well as IL-1R and TLR3.</text>
</comment>
<comment type="subunit">
    <text evidence="1 2">Interacts with host TNFRSF1A, RIPK1 and IRAK1; these interactions interfere with host NF-kappa-B activation at the level of receptor complexes (By similarity). Interacts with host protein UBQLN4 (By similarity).</text>
</comment>
<comment type="subcellular location">
    <subcellularLocation>
        <location evidence="2">Virion membrane</location>
        <topology evidence="2">Single-pass membrane protein</topology>
    </subcellularLocation>
    <subcellularLocation>
        <location evidence="2">Host cell membrane</location>
        <topology evidence="2">Single-pass membrane protein</topology>
    </subcellularLocation>
</comment>
<comment type="similarity">
    <text evidence="4">Belongs to the rubulavirus small hydrophobic protein family.</text>
</comment>
<gene>
    <name type="primary">SH</name>
</gene>
<keyword id="KW-1032">Host cell membrane</keyword>
<keyword id="KW-1043">Host membrane</keyword>
<keyword id="KW-0945">Host-virus interaction</keyword>
<keyword id="KW-1100">Inhibition of host NF-kappa-B by virus</keyword>
<keyword id="KW-0472">Membrane</keyword>
<keyword id="KW-0812">Transmembrane</keyword>
<keyword id="KW-1133">Transmembrane helix</keyword>
<keyword id="KW-0946">Virion</keyword>
<organismHost>
    <name type="scientific">Homo sapiens</name>
    <name type="common">Human</name>
    <dbReference type="NCBI Taxonomy" id="9606"/>
</organismHost>
<accession>P28083</accession>
<dbReference type="EMBL" id="X63713">
    <property type="protein sequence ID" value="CAA45246.1"/>
    <property type="molecule type" value="Genomic_RNA"/>
</dbReference>
<dbReference type="SMR" id="P28083"/>
<dbReference type="GO" id="GO:0020002">
    <property type="term" value="C:host cell plasma membrane"/>
    <property type="evidence" value="ECO:0007669"/>
    <property type="project" value="UniProtKB-SubCell"/>
</dbReference>
<dbReference type="GO" id="GO:0016020">
    <property type="term" value="C:membrane"/>
    <property type="evidence" value="ECO:0007669"/>
    <property type="project" value="UniProtKB-KW"/>
</dbReference>
<dbReference type="GO" id="GO:0055036">
    <property type="term" value="C:virion membrane"/>
    <property type="evidence" value="ECO:0007669"/>
    <property type="project" value="UniProtKB-SubCell"/>
</dbReference>
<dbReference type="GO" id="GO:0085034">
    <property type="term" value="P:symbiont-mediated suppression of host NF-kappaB cascade"/>
    <property type="evidence" value="ECO:0007669"/>
    <property type="project" value="UniProtKB-KW"/>
</dbReference>
<dbReference type="InterPro" id="IPR001477">
    <property type="entry name" value="SH"/>
</dbReference>
<dbReference type="Pfam" id="PF01445">
    <property type="entry name" value="SH"/>
    <property type="match status" value="1"/>
</dbReference>
<dbReference type="PIRSF" id="PIRSF003923">
    <property type="entry name" value="SH"/>
    <property type="match status" value="1"/>
</dbReference>
<organism>
    <name type="scientific">Mumps virus (strain Bristol 1)</name>
    <name type="common">MuV</name>
    <dbReference type="NCBI Taxonomy" id="11170"/>
    <lineage>
        <taxon>Viruses</taxon>
        <taxon>Riboviria</taxon>
        <taxon>Orthornavirae</taxon>
        <taxon>Negarnaviricota</taxon>
        <taxon>Haploviricotina</taxon>
        <taxon>Monjiviricetes</taxon>
        <taxon>Mononegavirales</taxon>
        <taxon>Paramyxoviridae</taxon>
        <taxon>Rubulavirinae</taxon>
        <taxon>Orthorubulavirus</taxon>
        <taxon>Orthorubulavirus parotitidis</taxon>
        <taxon>Mumps orthorubulavirus</taxon>
    </lineage>
</organism>
<name>SH_MUMPL</name>
<feature type="chain" id="PRO_0000142872" description="Small hydrophobic protein">
    <location>
        <begin position="1"/>
        <end position="57"/>
    </location>
</feature>
<feature type="topological domain" description="Virion surface" evidence="3">
    <location>
        <begin position="1"/>
        <end position="8"/>
    </location>
</feature>
<feature type="transmembrane region" description="Helical" evidence="3">
    <location>
        <begin position="9"/>
        <end position="29"/>
    </location>
</feature>
<feature type="topological domain" description="Intravirion" evidence="3">
    <location>
        <begin position="30"/>
        <end position="57"/>
    </location>
</feature>
<evidence type="ECO:0000250" key="1">
    <source>
        <dbReference type="UniProtKB" id="P22110"/>
    </source>
</evidence>
<evidence type="ECO:0000250" key="2">
    <source>
        <dbReference type="UniProtKB" id="P22112"/>
    </source>
</evidence>
<evidence type="ECO:0000255" key="3"/>
<evidence type="ECO:0000305" key="4"/>
<protein>
    <recommendedName>
        <fullName>Small hydrophobic protein</fullName>
    </recommendedName>
</protein>
<reference key="1">
    <citation type="journal article" date="1993" name="Arch. Virol.">
        <title>Identification of a new mumps virus lineage by nucleotide sequence analysis of the SH gene of ten different strains.</title>
        <authorList>
            <person name="Yeo R.P."/>
            <person name="Afzal M.A."/>
            <person name="Forsey T."/>
            <person name="Rima B.K."/>
        </authorList>
    </citation>
    <scope>NUCLEOTIDE SEQUENCE [GENOMIC RNA]</scope>
</reference>
<proteinExistence type="inferred from homology"/>
<sequence length="57" mass="6753">MPAIQPLLYLTFLLLILLYLIITLYVWVVSTITYKTAVRHAALYQRSLFRWSLDHSL</sequence>